<evidence type="ECO:0000250" key="1">
    <source>
        <dbReference type="UniProtKB" id="P27944"/>
    </source>
</evidence>
<evidence type="ECO:0000255" key="2"/>
<evidence type="ECO:0000305" key="3"/>
<dbReference type="EMBL" id="AY261360">
    <property type="status" value="NOT_ANNOTATED_CDS"/>
    <property type="molecule type" value="Genomic_DNA"/>
</dbReference>
<dbReference type="SMR" id="P0CAA1"/>
<dbReference type="Proteomes" id="UP000000861">
    <property type="component" value="Segment"/>
</dbReference>
<dbReference type="GO" id="GO:0085034">
    <property type="term" value="P:symbiont-mediated suppression of host NF-kappaB cascade"/>
    <property type="evidence" value="ECO:0007669"/>
    <property type="project" value="UniProtKB-KW"/>
</dbReference>
<feature type="signal peptide" evidence="2">
    <location>
        <begin position="1"/>
        <end position="16"/>
    </location>
</feature>
<feature type="chain" id="PRO_0000373591" description="Late protein I226R">
    <location>
        <begin position="17"/>
        <end position="226"/>
    </location>
</feature>
<feature type="glycosylation site" description="N-linked (GlcNAc...) asparagine; by host" evidence="2">
    <location>
        <position position="164"/>
    </location>
</feature>
<organism>
    <name type="scientific">African swine fever virus (isolate Pig/Kenya/KEN-50/1950)</name>
    <name type="common">ASFV</name>
    <dbReference type="NCBI Taxonomy" id="561445"/>
    <lineage>
        <taxon>Viruses</taxon>
        <taxon>Varidnaviria</taxon>
        <taxon>Bamfordvirae</taxon>
        <taxon>Nucleocytoviricota</taxon>
        <taxon>Pokkesviricetes</taxon>
        <taxon>Asfuvirales</taxon>
        <taxon>Asfarviridae</taxon>
        <taxon>Asfivirus</taxon>
        <taxon>African swine fever virus</taxon>
    </lineage>
</organism>
<comment type="function">
    <text evidence="1">Plays a role in the inhibition of host NF-kappa-B and IRF3 signaling pathways. Mechanistically, promotes the degradation of host IKBKG through enhancing its ubiquitination leading to inhibition of both pathways.</text>
</comment>
<comment type="induction">
    <text evidence="3">Expressed in the intermediate phase of the viral replicative cycle (immediately after DNA replication).</text>
</comment>
<comment type="similarity">
    <text evidence="3">Belongs to the asfivirus I226R family.</text>
</comment>
<gene>
    <name type="ordered locus">Ken-149</name>
</gene>
<keyword id="KW-0325">Glycoprotein</keyword>
<keyword id="KW-0945">Host-virus interaction</keyword>
<keyword id="KW-1100">Inhibition of host NF-kappa-B by virus</keyword>
<keyword id="KW-0426">Late protein</keyword>
<keyword id="KW-0732">Signal</keyword>
<protein>
    <recommendedName>
        <fullName>Late protein I226R</fullName>
        <shortName>pI226R</shortName>
    </recommendedName>
</protein>
<name>VF226_ASFK5</name>
<reference key="1">
    <citation type="submission" date="2003-03" db="EMBL/GenBank/DDBJ databases">
        <title>African swine fever virus genomes.</title>
        <authorList>
            <person name="Kutish G.F."/>
            <person name="Rock D.L."/>
        </authorList>
    </citation>
    <scope>NUCLEOTIDE SEQUENCE [LARGE SCALE GENOMIC DNA]</scope>
</reference>
<sequence length="226" mass="27070">MKMETFLVCLFHNAAGLHQQIQEILYLLRMHIYETNLYLKQELSRLIYPNRQLSFVLLMPLSLLRNWDDIEYLTDIVDDKQTLHYAANLLTIYVLHLSMYQKLTKPYFLLAVKRVSEKLNKKQRHSFYEVLVTSETLNNYENLPKNILNTLMFAVRYVFKPTPNYSEIIAELEKKNKIHHIIFNMVITDFQQIREQHMCKHLCETNNELRQECKEIIFDLKVVGNV</sequence>
<accession>P0CAA1</accession>
<proteinExistence type="inferred from homology"/>
<organismHost>
    <name type="scientific">Ornithodoros</name>
    <name type="common">relapsing fever ticks</name>
    <dbReference type="NCBI Taxonomy" id="6937"/>
</organismHost>
<organismHost>
    <name type="scientific">Phacochoerus aethiopicus</name>
    <name type="common">Warthog</name>
    <dbReference type="NCBI Taxonomy" id="85517"/>
</organismHost>
<organismHost>
    <name type="scientific">Phacochoerus africanus</name>
    <name type="common">Warthog</name>
    <dbReference type="NCBI Taxonomy" id="41426"/>
</organismHost>
<organismHost>
    <name type="scientific">Potamochoerus larvatus</name>
    <name type="common">Bushpig</name>
    <dbReference type="NCBI Taxonomy" id="273792"/>
</organismHost>
<organismHost>
    <name type="scientific">Sus scrofa</name>
    <name type="common">Pig</name>
    <dbReference type="NCBI Taxonomy" id="9823"/>
</organismHost>